<keyword id="KW-0413">Isomerase</keyword>
<keyword id="KW-1185">Reference proteome</keyword>
<keyword id="KW-0819">tRNA processing</keyword>
<evidence type="ECO:0000255" key="1">
    <source>
        <dbReference type="HAMAP-Rule" id="MF_01080"/>
    </source>
</evidence>
<name>TRUB_LEVBA</name>
<reference key="1">
    <citation type="journal article" date="2006" name="Proc. Natl. Acad. Sci. U.S.A.">
        <title>Comparative genomics of the lactic acid bacteria.</title>
        <authorList>
            <person name="Makarova K.S."/>
            <person name="Slesarev A."/>
            <person name="Wolf Y.I."/>
            <person name="Sorokin A."/>
            <person name="Mirkin B."/>
            <person name="Koonin E.V."/>
            <person name="Pavlov A."/>
            <person name="Pavlova N."/>
            <person name="Karamychev V."/>
            <person name="Polouchine N."/>
            <person name="Shakhova V."/>
            <person name="Grigoriev I."/>
            <person name="Lou Y."/>
            <person name="Rohksar D."/>
            <person name="Lucas S."/>
            <person name="Huang K."/>
            <person name="Goodstein D.M."/>
            <person name="Hawkins T."/>
            <person name="Plengvidhya V."/>
            <person name="Welker D."/>
            <person name="Hughes J."/>
            <person name="Goh Y."/>
            <person name="Benson A."/>
            <person name="Baldwin K."/>
            <person name="Lee J.-H."/>
            <person name="Diaz-Muniz I."/>
            <person name="Dosti B."/>
            <person name="Smeianov V."/>
            <person name="Wechter W."/>
            <person name="Barabote R."/>
            <person name="Lorca G."/>
            <person name="Altermann E."/>
            <person name="Barrangou R."/>
            <person name="Ganesan B."/>
            <person name="Xie Y."/>
            <person name="Rawsthorne H."/>
            <person name="Tamir D."/>
            <person name="Parker C."/>
            <person name="Breidt F."/>
            <person name="Broadbent J.R."/>
            <person name="Hutkins R."/>
            <person name="O'Sullivan D."/>
            <person name="Steele J."/>
            <person name="Unlu G."/>
            <person name="Saier M.H. Jr."/>
            <person name="Klaenhammer T."/>
            <person name="Richardson P."/>
            <person name="Kozyavkin S."/>
            <person name="Weimer B.C."/>
            <person name="Mills D.A."/>
        </authorList>
    </citation>
    <scope>NUCLEOTIDE SEQUENCE [LARGE SCALE GENOMIC DNA]</scope>
    <source>
        <strain>ATCC 367 / BCRC 12310 / CIP 105137 / JCM 1170 / LMG 11437 / NCIMB 947 / NCTC 947</strain>
    </source>
</reference>
<protein>
    <recommendedName>
        <fullName evidence="1">tRNA pseudouridine synthase B</fullName>
        <ecNumber evidence="1">5.4.99.25</ecNumber>
    </recommendedName>
    <alternativeName>
        <fullName evidence="1">tRNA pseudouridine(55) synthase</fullName>
        <shortName evidence="1">Psi55 synthase</shortName>
    </alternativeName>
    <alternativeName>
        <fullName evidence="1">tRNA pseudouridylate synthase</fullName>
    </alternativeName>
    <alternativeName>
        <fullName evidence="1">tRNA-uridine isomerase</fullName>
    </alternativeName>
</protein>
<comment type="function">
    <text evidence="1">Responsible for synthesis of pseudouridine from uracil-55 in the psi GC loop of transfer RNAs.</text>
</comment>
<comment type="catalytic activity">
    <reaction evidence="1">
        <text>uridine(55) in tRNA = pseudouridine(55) in tRNA</text>
        <dbReference type="Rhea" id="RHEA:42532"/>
        <dbReference type="Rhea" id="RHEA-COMP:10101"/>
        <dbReference type="Rhea" id="RHEA-COMP:10102"/>
        <dbReference type="ChEBI" id="CHEBI:65314"/>
        <dbReference type="ChEBI" id="CHEBI:65315"/>
        <dbReference type="EC" id="5.4.99.25"/>
    </reaction>
</comment>
<comment type="similarity">
    <text evidence="1">Belongs to the pseudouridine synthase TruB family. Type 1 subfamily.</text>
</comment>
<dbReference type="EC" id="5.4.99.25" evidence="1"/>
<dbReference type="EMBL" id="CP000416">
    <property type="protein sequence ID" value="ABJ64435.1"/>
    <property type="molecule type" value="Genomic_DNA"/>
</dbReference>
<dbReference type="RefSeq" id="WP_011668008.1">
    <property type="nucleotide sequence ID" value="NC_008497.1"/>
</dbReference>
<dbReference type="SMR" id="Q03QT7"/>
<dbReference type="STRING" id="387344.LVIS_1333"/>
<dbReference type="KEGG" id="lbr:LVIS_1333"/>
<dbReference type="eggNOG" id="COG0130">
    <property type="taxonomic scope" value="Bacteria"/>
</dbReference>
<dbReference type="HOGENOM" id="CLU_032087_0_1_9"/>
<dbReference type="Proteomes" id="UP000001652">
    <property type="component" value="Chromosome"/>
</dbReference>
<dbReference type="GO" id="GO:0003723">
    <property type="term" value="F:RNA binding"/>
    <property type="evidence" value="ECO:0007669"/>
    <property type="project" value="InterPro"/>
</dbReference>
<dbReference type="GO" id="GO:0160148">
    <property type="term" value="F:tRNA pseudouridine(55) synthase activity"/>
    <property type="evidence" value="ECO:0007669"/>
    <property type="project" value="UniProtKB-EC"/>
</dbReference>
<dbReference type="GO" id="GO:1990481">
    <property type="term" value="P:mRNA pseudouridine synthesis"/>
    <property type="evidence" value="ECO:0007669"/>
    <property type="project" value="TreeGrafter"/>
</dbReference>
<dbReference type="GO" id="GO:0031119">
    <property type="term" value="P:tRNA pseudouridine synthesis"/>
    <property type="evidence" value="ECO:0007669"/>
    <property type="project" value="UniProtKB-UniRule"/>
</dbReference>
<dbReference type="CDD" id="cd02573">
    <property type="entry name" value="PseudoU_synth_EcTruB"/>
    <property type="match status" value="1"/>
</dbReference>
<dbReference type="FunFam" id="3.30.2350.10:FF:000011">
    <property type="entry name" value="tRNA pseudouridine synthase B"/>
    <property type="match status" value="1"/>
</dbReference>
<dbReference type="Gene3D" id="3.30.2350.10">
    <property type="entry name" value="Pseudouridine synthase"/>
    <property type="match status" value="1"/>
</dbReference>
<dbReference type="HAMAP" id="MF_01080">
    <property type="entry name" value="TruB_bact"/>
    <property type="match status" value="1"/>
</dbReference>
<dbReference type="InterPro" id="IPR020103">
    <property type="entry name" value="PsdUridine_synth_cat_dom_sf"/>
</dbReference>
<dbReference type="InterPro" id="IPR002501">
    <property type="entry name" value="PsdUridine_synth_N"/>
</dbReference>
<dbReference type="InterPro" id="IPR014780">
    <property type="entry name" value="tRNA_psdUridine_synth_TruB"/>
</dbReference>
<dbReference type="InterPro" id="IPR032819">
    <property type="entry name" value="TruB_C"/>
</dbReference>
<dbReference type="NCBIfam" id="TIGR00431">
    <property type="entry name" value="TruB"/>
    <property type="match status" value="1"/>
</dbReference>
<dbReference type="PANTHER" id="PTHR13767:SF2">
    <property type="entry name" value="PSEUDOURIDYLATE SYNTHASE TRUB1"/>
    <property type="match status" value="1"/>
</dbReference>
<dbReference type="PANTHER" id="PTHR13767">
    <property type="entry name" value="TRNA-PSEUDOURIDINE SYNTHASE"/>
    <property type="match status" value="1"/>
</dbReference>
<dbReference type="Pfam" id="PF16198">
    <property type="entry name" value="TruB_C_2"/>
    <property type="match status" value="1"/>
</dbReference>
<dbReference type="Pfam" id="PF01509">
    <property type="entry name" value="TruB_N"/>
    <property type="match status" value="1"/>
</dbReference>
<dbReference type="SUPFAM" id="SSF55120">
    <property type="entry name" value="Pseudouridine synthase"/>
    <property type="match status" value="1"/>
</dbReference>
<organism>
    <name type="scientific">Levilactobacillus brevis (strain ATCC 367 / BCRC 12310 / CIP 105137 / JCM 1170 / LMG 11437 / NCIMB 947 / NCTC 947)</name>
    <name type="common">Lactobacillus brevis</name>
    <dbReference type="NCBI Taxonomy" id="387344"/>
    <lineage>
        <taxon>Bacteria</taxon>
        <taxon>Bacillati</taxon>
        <taxon>Bacillota</taxon>
        <taxon>Bacilli</taxon>
        <taxon>Lactobacillales</taxon>
        <taxon>Lactobacillaceae</taxon>
        <taxon>Levilactobacillus</taxon>
    </lineage>
</organism>
<accession>Q03QT7</accession>
<proteinExistence type="inferred from homology"/>
<feature type="chain" id="PRO_1000084609" description="tRNA pseudouridine synthase B">
    <location>
        <begin position="1"/>
        <end position="303"/>
    </location>
</feature>
<feature type="active site" description="Nucleophile" evidence="1">
    <location>
        <position position="38"/>
    </location>
</feature>
<sequence>MNGIIPLYKERGLTSFDCVAKLRHILQTKKVGHSGTLDPSVDGVLPICIGSATKVVPYLMASGKVYRGSVTLGLATTTEDLDGDVVERQPLERPFTADQVAAAAQALTGTIQQTPPMYSAVKVNGRKLYEYARAGETVERPTRTITVDRFDLQGAGTFDATAGTQTIDFEIACSKGTYVRTLAVDLGQQLGVPAVMATLTRLKSGGFTLSQTVTLADVEAAMADDQIERTLRPIDYALQDYPHVALDEHLWALVKNGVFLSAAELNQATEPELALTYQGETKCLYRWSDEKKQYRPLKMFAVN</sequence>
<gene>
    <name evidence="1" type="primary">truB</name>
    <name type="ordered locus">LVIS_1333</name>
</gene>